<proteinExistence type="evidence at protein level"/>
<feature type="chain" id="PRO_0000234069" description="Zinc finger CCCH domain-containing protein 4">
    <location>
        <begin position="1"/>
        <end position="1304"/>
    </location>
</feature>
<feature type="zinc finger region" description="C3H1-type 1" evidence="3">
    <location>
        <begin position="389"/>
        <end position="416"/>
    </location>
</feature>
<feature type="zinc finger region" description="C3H1-type 2" evidence="3">
    <location>
        <begin position="418"/>
        <end position="445"/>
    </location>
</feature>
<feature type="zinc finger region" description="C3H1-type 3" evidence="3">
    <location>
        <begin position="446"/>
        <end position="469"/>
    </location>
</feature>
<feature type="region of interest" description="Disordered" evidence="4">
    <location>
        <begin position="1"/>
        <end position="387"/>
    </location>
</feature>
<feature type="region of interest" description="Disordered" evidence="4">
    <location>
        <begin position="485"/>
        <end position="567"/>
    </location>
</feature>
<feature type="region of interest" description="Disordered" evidence="4">
    <location>
        <begin position="601"/>
        <end position="691"/>
    </location>
</feature>
<feature type="region of interest" description="Disordered" evidence="4">
    <location>
        <begin position="719"/>
        <end position="970"/>
    </location>
</feature>
<feature type="region of interest" description="Disordered" evidence="4">
    <location>
        <begin position="994"/>
        <end position="1304"/>
    </location>
</feature>
<feature type="coiled-coil region" evidence="2">
    <location>
        <begin position="94"/>
        <end position="128"/>
    </location>
</feature>
<feature type="coiled-coil region" evidence="2">
    <location>
        <begin position="778"/>
        <end position="809"/>
    </location>
</feature>
<feature type="compositionally biased region" description="Pro residues" evidence="4">
    <location>
        <begin position="1"/>
        <end position="33"/>
    </location>
</feature>
<feature type="compositionally biased region" description="Acidic residues" evidence="4">
    <location>
        <begin position="53"/>
        <end position="73"/>
    </location>
</feature>
<feature type="compositionally biased region" description="Basic and acidic residues" evidence="4">
    <location>
        <begin position="80"/>
        <end position="99"/>
    </location>
</feature>
<feature type="compositionally biased region" description="Basic residues" evidence="4">
    <location>
        <begin position="100"/>
        <end position="130"/>
    </location>
</feature>
<feature type="compositionally biased region" description="Acidic residues" evidence="4">
    <location>
        <begin position="135"/>
        <end position="144"/>
    </location>
</feature>
<feature type="compositionally biased region" description="Polar residues" evidence="4">
    <location>
        <begin position="165"/>
        <end position="174"/>
    </location>
</feature>
<feature type="compositionally biased region" description="Acidic residues" evidence="4">
    <location>
        <begin position="194"/>
        <end position="218"/>
    </location>
</feature>
<feature type="compositionally biased region" description="Basic and acidic residues" evidence="4">
    <location>
        <begin position="219"/>
        <end position="235"/>
    </location>
</feature>
<feature type="compositionally biased region" description="Basic residues" evidence="4">
    <location>
        <begin position="238"/>
        <end position="251"/>
    </location>
</feature>
<feature type="compositionally biased region" description="Gly residues" evidence="4">
    <location>
        <begin position="252"/>
        <end position="264"/>
    </location>
</feature>
<feature type="compositionally biased region" description="Acidic residues" evidence="4">
    <location>
        <begin position="277"/>
        <end position="303"/>
    </location>
</feature>
<feature type="compositionally biased region" description="Basic and acidic residues" evidence="4">
    <location>
        <begin position="304"/>
        <end position="320"/>
    </location>
</feature>
<feature type="compositionally biased region" description="Basic residues" evidence="4">
    <location>
        <begin position="322"/>
        <end position="346"/>
    </location>
</feature>
<feature type="compositionally biased region" description="Acidic residues" evidence="4">
    <location>
        <begin position="357"/>
        <end position="368"/>
    </location>
</feature>
<feature type="compositionally biased region" description="Basic and acidic residues" evidence="4">
    <location>
        <begin position="376"/>
        <end position="387"/>
    </location>
</feature>
<feature type="compositionally biased region" description="Acidic residues" evidence="4">
    <location>
        <begin position="485"/>
        <end position="495"/>
    </location>
</feature>
<feature type="compositionally biased region" description="Pro residues" evidence="4">
    <location>
        <begin position="506"/>
        <end position="529"/>
    </location>
</feature>
<feature type="compositionally biased region" description="Pro residues" evidence="4">
    <location>
        <begin position="538"/>
        <end position="556"/>
    </location>
</feature>
<feature type="compositionally biased region" description="Pro residues" evidence="4">
    <location>
        <begin position="603"/>
        <end position="622"/>
    </location>
</feature>
<feature type="compositionally biased region" description="Basic and acidic residues" evidence="4">
    <location>
        <begin position="628"/>
        <end position="660"/>
    </location>
</feature>
<feature type="compositionally biased region" description="Pro residues" evidence="4">
    <location>
        <begin position="669"/>
        <end position="683"/>
    </location>
</feature>
<feature type="compositionally biased region" description="Basic and acidic residues" evidence="4">
    <location>
        <begin position="787"/>
        <end position="804"/>
    </location>
</feature>
<feature type="compositionally biased region" description="Polar residues" evidence="4">
    <location>
        <begin position="824"/>
        <end position="852"/>
    </location>
</feature>
<feature type="compositionally biased region" description="Basic and acidic residues" evidence="4">
    <location>
        <begin position="869"/>
        <end position="884"/>
    </location>
</feature>
<feature type="compositionally biased region" description="Low complexity" evidence="4">
    <location>
        <begin position="913"/>
        <end position="929"/>
    </location>
</feature>
<feature type="compositionally biased region" description="Pro residues" evidence="4">
    <location>
        <begin position="994"/>
        <end position="1005"/>
    </location>
</feature>
<feature type="compositionally biased region" description="Polar residues" evidence="4">
    <location>
        <begin position="1028"/>
        <end position="1044"/>
    </location>
</feature>
<feature type="compositionally biased region" description="Polar residues" evidence="4">
    <location>
        <begin position="1058"/>
        <end position="1067"/>
    </location>
</feature>
<feature type="compositionally biased region" description="Basic and acidic residues" evidence="4">
    <location>
        <begin position="1068"/>
        <end position="1085"/>
    </location>
</feature>
<feature type="compositionally biased region" description="Low complexity" evidence="4">
    <location>
        <begin position="1098"/>
        <end position="1129"/>
    </location>
</feature>
<feature type="compositionally biased region" description="Low complexity" evidence="4">
    <location>
        <begin position="1137"/>
        <end position="1146"/>
    </location>
</feature>
<feature type="compositionally biased region" description="Polar residues" evidence="4">
    <location>
        <begin position="1204"/>
        <end position="1220"/>
    </location>
</feature>
<feature type="compositionally biased region" description="Low complexity" evidence="4">
    <location>
        <begin position="1225"/>
        <end position="1235"/>
    </location>
</feature>
<feature type="modified residue" description="Phosphoserine" evidence="1">
    <location>
        <position position="92"/>
    </location>
</feature>
<feature type="modified residue" description="Phosphoserine" evidence="1">
    <location>
        <position position="94"/>
    </location>
</feature>
<feature type="modified residue" description="Phosphotyrosine" evidence="1">
    <location>
        <position position="155"/>
    </location>
</feature>
<feature type="modified residue" description="Asymmetric dimethylarginine" evidence="13">
    <location>
        <position position="599"/>
    </location>
</feature>
<feature type="modified residue" description="Phosphoserine" evidence="12">
    <location>
        <position position="816"/>
    </location>
</feature>
<feature type="modified residue" description="Phosphoserine" evidence="12">
    <location>
        <position position="817"/>
    </location>
</feature>
<feature type="modified residue" description="Phosphoserine" evidence="1">
    <location>
        <position position="913"/>
    </location>
</feature>
<feature type="modified residue" description="Phosphoserine" evidence="1">
    <location>
        <position position="916"/>
    </location>
</feature>
<feature type="modified residue" description="Phosphoserine" evidence="12">
    <location>
        <position position="917"/>
    </location>
</feature>
<feature type="modified residue" description="Phosphoserine" evidence="11 12">
    <location>
        <position position="1104"/>
    </location>
</feature>
<feature type="modified residue" description="Phosphoserine" evidence="11 12">
    <location>
        <position position="1109"/>
    </location>
</feature>
<feature type="modified residue" description="Phosphoserine" evidence="1">
    <location>
        <position position="1111"/>
    </location>
</feature>
<feature type="modified residue" description="Phosphoserine" evidence="12">
    <location>
        <position position="1115"/>
    </location>
</feature>
<feature type="modified residue" description="Phosphothreonine" evidence="12">
    <location>
        <position position="1119"/>
    </location>
</feature>
<feature type="modified residue" description="Phosphoserine" evidence="12">
    <location>
        <position position="1270"/>
    </location>
</feature>
<feature type="modified residue" description="Phosphoserine" evidence="11 12">
    <location>
        <position position="1276"/>
    </location>
</feature>
<feature type="splice variant" id="VSP_018209" description="In isoform 2." evidence="7">
    <location>
        <begin position="726"/>
        <end position="808"/>
    </location>
</feature>
<keyword id="KW-0025">Alternative splicing</keyword>
<keyword id="KW-0158">Chromosome</keyword>
<keyword id="KW-0175">Coiled coil</keyword>
<keyword id="KW-0479">Metal-binding</keyword>
<keyword id="KW-0488">Methylation</keyword>
<keyword id="KW-0597">Phosphoprotein</keyword>
<keyword id="KW-1185">Reference proteome</keyword>
<keyword id="KW-0677">Repeat</keyword>
<keyword id="KW-0694">RNA-binding</keyword>
<keyword id="KW-0804">Transcription</keyword>
<keyword id="KW-0805">Transcription regulation</keyword>
<keyword id="KW-0806">Transcription termination</keyword>
<keyword id="KW-0862">Zinc</keyword>
<keyword id="KW-0863">Zinc-finger</keyword>
<comment type="function">
    <text evidence="6">RNA-binding protein that suppresses transcription of long non-coding RNAs (lncRNAs) (PubMed:33767452). LncRNAs are defined as transcripts more than 200 nucleotides that are not translated into protein (PubMed:33767452). Together with WDR82, part of a transcription termination checkpoint that promotes transcription termination of lncRNAs and their subsequent degradation by the exosome (PubMed:33767452). The transcription termination checkpoint is activated by the inefficiently spliced first exon of lncRNAs (PubMed:33767452).</text>
</comment>
<comment type="subunit">
    <text evidence="6">Interacts with WDR82.</text>
</comment>
<comment type="subcellular location">
    <subcellularLocation>
        <location evidence="6">Chromosome</location>
    </subcellularLocation>
    <text evidence="6">Recruited at sites of high RNA polymerase II occupancy.</text>
</comment>
<comment type="alternative products">
    <event type="alternative splicing"/>
    <isoform>
        <id>Q6ZPZ3-1</id>
        <name>1</name>
        <sequence type="displayed"/>
    </isoform>
    <isoform>
        <id>Q6ZPZ3-2</id>
        <name>2</name>
        <sequence type="described" ref="VSP_018209"/>
    </isoform>
</comment>
<comment type="disruption phenotype">
    <text evidence="5">Early embryonic lethality: embryos do not survive beyond bastocyst stage due to defective epiblast and primitive endoderm lineages formation.</text>
</comment>
<comment type="similarity">
    <text evidence="9">Belongs to the suppressor of sable family.</text>
</comment>
<protein>
    <recommendedName>
        <fullName evidence="9">Zinc finger CCCH domain-containing protein 4</fullName>
    </recommendedName>
</protein>
<sequence>MEAVPGTPPPPPSESPPPPSPPPPSTPSPPPCSPDGRAATPHLLHHRLPLPDDREDGELEEGELEDDGAEEVQDPPGGQERSRKEKGEKHHSDSEEEKSHRRLKRKRKKEREKEKRRSKKRRKSKHKRHASSSDDFSDFSDDSDFSPSEKSHRKYRDYSPPYAPSHQQYSSSHNAPLPKKSYSKMDSKGYSMYEDYENEQYGEYEGDEEEDMGKEDYDDFTKELNQYRRAKEGSSRGRGSRGRGRGYRGRGSRGGSRGRGMGRGSRGRGRGSMGEHPEDEEDLYEEEIEYGESEEPMGDDDYDDYSKELNQYRRSKDSRGRGLSRGRGRGSRGGRGKGMGRGRGRGGRGGMSKGGMNDDEDFYDDDMGDGGGGSYRRSDHDKPHQQSDKKGKVICKYFVEGRCTWGDHCNFSHDIELPKKRELCKFYITGFCARAENCPYMHGDFPCKLYHTTGNCINGDDCMFSHDPLTEETRELLDKMLADDAEAGAEDEKEVEELKKQGINPLPKPPPGVGLLPTPPRPPGPPAPTSPNGRPMQGGPPPPPPPPPPPPGPPQMSLPTHEPLSPQQLQQDMYNKKIPSLFEIVVRPTGQLAEKLGVRFPGPGGPSGPMGPGPNMGPPGPMGGPMHPDMHPDMHPDMHPDMHPDMHPDMHPDMHPDMHPDMPMGPGMNPGPPMGPGGPPMMPYGPGDSPHSGMMPPIPPAQNFYENFYPQQEGMEMEPGLVGDAEDYGHYEELPGQPGEPLFPEHPLEPDSFPEGGPPGRPKAGAGVPDFLPSAQRALYLRIQQKQQEEERARRLAESSKQDRENEEGDTGNWYSSDEDEGGSSVTSILKTLRQQTSSRPQASVGEPSSSGLGDPRLQKGHPTGSRLSDPRLSRDPRLSRHAETSGGSGPGDSGPSDPRLARALPTSKAEGSLHSSPAGPSSSKGQPPAEEEEGERALREKAVNIPLDPLPGHPLRDPRSQLQQFSHIKKDVTLSKPSFARTVLWNPEDLIPLPIPKQDVPPVPAALQSLPALDPRLHRSTPPGPPNTRQRPGSTDPSTSGSNLPDFELLSRILKTVNVNTPGQSEKPSDPRVRKTPTDPRLQKPADPVAASRAAKPCPTEASPPAASPSGDSSPPATAPYDPRVLAAGGLGQGSSSGQSSVLSGISLYDPRTPNAGGKTAEPASDTSAQPKGPEGNGKGSASKAKEPPFVRKSALEQPETGKASTDGATATDRYNSYNRPRPKATAAPTAASSTPPPEGATPQPGVHNLPVPTLFGTVKPAPKTGTGSPFAGNSPAREGEQDAGSLKDVFKGFDPTASPFCQ</sequence>
<reference key="1">
    <citation type="journal article" date="2009" name="PLoS Biol.">
        <title>Lineage-specific biology revealed by a finished genome assembly of the mouse.</title>
        <authorList>
            <person name="Church D.M."/>
            <person name="Goodstadt L."/>
            <person name="Hillier L.W."/>
            <person name="Zody M.C."/>
            <person name="Goldstein S."/>
            <person name="She X."/>
            <person name="Bult C.J."/>
            <person name="Agarwala R."/>
            <person name="Cherry J.L."/>
            <person name="DiCuccio M."/>
            <person name="Hlavina W."/>
            <person name="Kapustin Y."/>
            <person name="Meric P."/>
            <person name="Maglott D."/>
            <person name="Birtle Z."/>
            <person name="Marques A.C."/>
            <person name="Graves T."/>
            <person name="Zhou S."/>
            <person name="Teague B."/>
            <person name="Potamousis K."/>
            <person name="Churas C."/>
            <person name="Place M."/>
            <person name="Herschleb J."/>
            <person name="Runnheim R."/>
            <person name="Forrest D."/>
            <person name="Amos-Landgraf J."/>
            <person name="Schwartz D.C."/>
            <person name="Cheng Z."/>
            <person name="Lindblad-Toh K."/>
            <person name="Eichler E.E."/>
            <person name="Ponting C.P."/>
        </authorList>
    </citation>
    <scope>NUCLEOTIDE SEQUENCE [LARGE SCALE GENOMIC DNA]</scope>
    <source>
        <strain>C57BL/6J</strain>
    </source>
</reference>
<reference key="2">
    <citation type="journal article" date="2003" name="DNA Res.">
        <title>Prediction of the coding sequences of mouse homologues of KIAA gene: III. The complete nucleotide sequences of 500 mouse KIAA-homologous cDNAs identified by screening of terminal sequences of cDNA clones randomly sampled from size-fractionated libraries.</title>
        <authorList>
            <person name="Okazaki N."/>
            <person name="Kikuno R."/>
            <person name="Ohara R."/>
            <person name="Inamoto S."/>
            <person name="Koseki H."/>
            <person name="Hiraoka S."/>
            <person name="Saga Y."/>
            <person name="Nagase T."/>
            <person name="Ohara O."/>
            <person name="Koga H."/>
        </authorList>
    </citation>
    <scope>NUCLEOTIDE SEQUENCE [LARGE SCALE MRNA] OF 310-1304 (ISOFORM 2)</scope>
    <source>
        <tissue>Embryonic tail</tissue>
    </source>
</reference>
<reference key="3">
    <citation type="journal article" date="2007" name="Proc. Natl. Acad. Sci. U.S.A.">
        <title>Large-scale phosphorylation analysis of mouse liver.</title>
        <authorList>
            <person name="Villen J."/>
            <person name="Beausoleil S.A."/>
            <person name="Gerber S.A."/>
            <person name="Gygi S.P."/>
        </authorList>
    </citation>
    <scope>PHOSPHORYLATION [LARGE SCALE ANALYSIS] AT SER-1104; SER-1109 AND SER-1276</scope>
    <scope>IDENTIFICATION BY MASS SPECTROMETRY [LARGE SCALE ANALYSIS]</scope>
    <source>
        <tissue>Liver</tissue>
    </source>
</reference>
<reference key="4">
    <citation type="journal article" date="2009" name="Mol. Cell. Proteomics">
        <title>Large scale localization of protein phosphorylation by use of electron capture dissociation mass spectrometry.</title>
        <authorList>
            <person name="Sweet S.M."/>
            <person name="Bailey C.M."/>
            <person name="Cunningham D.L."/>
            <person name="Heath J.K."/>
            <person name="Cooper H.J."/>
        </authorList>
    </citation>
    <scope>IDENTIFICATION BY MASS SPECTROMETRY [LARGE SCALE ANALYSIS]</scope>
    <source>
        <tissue>Embryonic fibroblast</tissue>
    </source>
</reference>
<reference key="5">
    <citation type="journal article" date="2010" name="Cell">
        <title>A tissue-specific atlas of mouse protein phosphorylation and expression.</title>
        <authorList>
            <person name="Huttlin E.L."/>
            <person name="Jedrychowski M.P."/>
            <person name="Elias J.E."/>
            <person name="Goswami T."/>
            <person name="Rad R."/>
            <person name="Beausoleil S.A."/>
            <person name="Villen J."/>
            <person name="Haas W."/>
            <person name="Sowa M.E."/>
            <person name="Gygi S.P."/>
        </authorList>
    </citation>
    <scope>PHOSPHORYLATION [LARGE SCALE ANALYSIS] AT SER-816; SER-817; SER-917; SER-1104; SER-1109; SER-1115; THR-1119; SER-1270 AND SER-1276</scope>
    <scope>IDENTIFICATION BY MASS SPECTROMETRY [LARGE SCALE ANALYSIS]</scope>
    <source>
        <tissue>Brain</tissue>
        <tissue>Brown adipose tissue</tissue>
        <tissue>Heart</tissue>
        <tissue>Kidney</tissue>
        <tissue>Liver</tissue>
        <tissue>Lung</tissue>
        <tissue>Pancreas</tissue>
        <tissue>Spleen</tissue>
        <tissue>Testis</tissue>
    </source>
</reference>
<reference key="6">
    <citation type="journal article" date="2014" name="Mol. Cell. Proteomics">
        <title>Immunoaffinity enrichment and mass spectrometry analysis of protein methylation.</title>
        <authorList>
            <person name="Guo A."/>
            <person name="Gu H."/>
            <person name="Zhou J."/>
            <person name="Mulhern D."/>
            <person name="Wang Y."/>
            <person name="Lee K.A."/>
            <person name="Yang V."/>
            <person name="Aguiar M."/>
            <person name="Kornhauser J."/>
            <person name="Jia X."/>
            <person name="Ren J."/>
            <person name="Beausoleil S.A."/>
            <person name="Silva J.C."/>
            <person name="Vemulapalli V."/>
            <person name="Bedford M.T."/>
            <person name="Comb M.J."/>
        </authorList>
    </citation>
    <scope>METHYLATION [LARGE SCALE ANALYSIS] AT ARG-599</scope>
    <scope>IDENTIFICATION BY MASS SPECTROMETRY [LARGE SCALE ANALYSIS]</scope>
    <source>
        <tissue>Embryo</tissue>
    </source>
</reference>
<reference key="7">
    <citation type="journal article" date="2021" name="Biol. Reprod.">
        <title>ZC3H4-a novel Cys-Cys-Cys-His-type zinc finger protein-is essential for early embryogenesis in mice.</title>
        <authorList>
            <person name="Su J."/>
            <person name="Miao X."/>
            <person name="Archambault D."/>
            <person name="Mager J."/>
            <person name="Cui W."/>
        </authorList>
    </citation>
    <scope>DISRUPTION PHENOTYPE</scope>
</reference>
<reference key="8">
    <citation type="journal article" date="2021" name="Nat. Struct. Mol. Biol.">
        <title>A first exon termination checkpoint preferentially suppresses extragenic transcription.</title>
        <authorList>
            <person name="Austenaa L.M.I."/>
            <person name="Piccolo V."/>
            <person name="Russo M."/>
            <person name="Prosperini E."/>
            <person name="Polletti S."/>
            <person name="Polizzese D."/>
            <person name="Ghisletti S."/>
            <person name="Barozzi I."/>
            <person name="Diaferia G.R."/>
            <person name="Natoli G."/>
        </authorList>
    </citation>
    <scope>FUNCTION</scope>
    <scope>SUBCELLULAR LOCATION</scope>
    <scope>INTERACTION WITH WDR82</scope>
</reference>
<organism>
    <name type="scientific">Mus musculus</name>
    <name type="common">Mouse</name>
    <dbReference type="NCBI Taxonomy" id="10090"/>
    <lineage>
        <taxon>Eukaryota</taxon>
        <taxon>Metazoa</taxon>
        <taxon>Chordata</taxon>
        <taxon>Craniata</taxon>
        <taxon>Vertebrata</taxon>
        <taxon>Euteleostomi</taxon>
        <taxon>Mammalia</taxon>
        <taxon>Eutheria</taxon>
        <taxon>Euarchontoglires</taxon>
        <taxon>Glires</taxon>
        <taxon>Rodentia</taxon>
        <taxon>Myomorpha</taxon>
        <taxon>Muroidea</taxon>
        <taxon>Muridae</taxon>
        <taxon>Murinae</taxon>
        <taxon>Mus</taxon>
        <taxon>Mus</taxon>
    </lineage>
</organism>
<evidence type="ECO:0000250" key="1">
    <source>
        <dbReference type="UniProtKB" id="Q9UPT8"/>
    </source>
</evidence>
<evidence type="ECO:0000255" key="2"/>
<evidence type="ECO:0000255" key="3">
    <source>
        <dbReference type="PROSITE-ProRule" id="PRU00723"/>
    </source>
</evidence>
<evidence type="ECO:0000256" key="4">
    <source>
        <dbReference type="SAM" id="MobiDB-lite"/>
    </source>
</evidence>
<evidence type="ECO:0000269" key="5">
    <source>
    </source>
</evidence>
<evidence type="ECO:0000269" key="6">
    <source>
    </source>
</evidence>
<evidence type="ECO:0000303" key="7">
    <source>
    </source>
</evidence>
<evidence type="ECO:0000303" key="8">
    <source>
    </source>
</evidence>
<evidence type="ECO:0000305" key="9"/>
<evidence type="ECO:0000312" key="10">
    <source>
        <dbReference type="MGI" id="MGI:2682314"/>
    </source>
</evidence>
<evidence type="ECO:0007744" key="11">
    <source>
    </source>
</evidence>
<evidence type="ECO:0007744" key="12">
    <source>
    </source>
</evidence>
<evidence type="ECO:0007744" key="13">
    <source>
    </source>
</evidence>
<gene>
    <name evidence="8 10" type="primary">Zc3h4</name>
    <name evidence="7" type="synonym">Kiaa1064</name>
</gene>
<name>ZC3H4_MOUSE</name>
<accession>Q6ZPZ3</accession>
<dbReference type="EMBL" id="AC148972">
    <property type="status" value="NOT_ANNOTATED_CDS"/>
    <property type="molecule type" value="Genomic_DNA"/>
</dbReference>
<dbReference type="EMBL" id="AK129275">
    <property type="protein sequence ID" value="BAC98085.1"/>
    <property type="molecule type" value="mRNA"/>
</dbReference>
<dbReference type="RefSeq" id="NP_001414239.1">
    <molecule id="Q6ZPZ3-1"/>
    <property type="nucleotide sequence ID" value="NM_001427310.1"/>
</dbReference>
<dbReference type="RefSeq" id="NP_001414240.1">
    <molecule id="Q6ZPZ3-2"/>
    <property type="nucleotide sequence ID" value="NM_001427311.1"/>
</dbReference>
<dbReference type="RefSeq" id="NP_941033.2">
    <property type="nucleotide sequence ID" value="NM_198631.2"/>
</dbReference>
<dbReference type="RefSeq" id="XP_006540165.1">
    <molecule id="Q6ZPZ3-1"/>
    <property type="nucleotide sequence ID" value="XM_006540102.5"/>
</dbReference>
<dbReference type="RefSeq" id="XP_006540169.1">
    <molecule id="Q6ZPZ3-2"/>
    <property type="nucleotide sequence ID" value="XM_006540106.5"/>
</dbReference>
<dbReference type="RefSeq" id="XP_006540170.1">
    <molecule id="Q6ZPZ3-1"/>
    <property type="nucleotide sequence ID" value="XM_006540107.5"/>
</dbReference>
<dbReference type="RefSeq" id="XP_006540171.1">
    <property type="nucleotide sequence ID" value="XM_006540108.3"/>
</dbReference>
<dbReference type="RefSeq" id="XP_017177799.1">
    <property type="nucleotide sequence ID" value="XM_017322310.1"/>
</dbReference>
<dbReference type="SMR" id="Q6ZPZ3"/>
<dbReference type="BioGRID" id="236971">
    <property type="interactions" value="1"/>
</dbReference>
<dbReference type="DIP" id="DIP-61658N"/>
<dbReference type="FunCoup" id="Q6ZPZ3">
    <property type="interactions" value="3665"/>
</dbReference>
<dbReference type="IntAct" id="Q6ZPZ3">
    <property type="interactions" value="1"/>
</dbReference>
<dbReference type="STRING" id="10090.ENSMUSP00000096386"/>
<dbReference type="GlyGen" id="Q6ZPZ3">
    <property type="glycosylation" value="3 sites"/>
</dbReference>
<dbReference type="iPTMnet" id="Q6ZPZ3"/>
<dbReference type="PhosphoSitePlus" id="Q6ZPZ3"/>
<dbReference type="SwissPalm" id="Q6ZPZ3"/>
<dbReference type="jPOST" id="Q6ZPZ3"/>
<dbReference type="PaxDb" id="10090-ENSMUSP00000096386"/>
<dbReference type="PeptideAtlas" id="Q6ZPZ3"/>
<dbReference type="ProteomicsDB" id="302042">
    <molecule id="Q6ZPZ3-1"/>
</dbReference>
<dbReference type="ProteomicsDB" id="302043">
    <molecule id="Q6ZPZ3-2"/>
</dbReference>
<dbReference type="Pumba" id="Q6ZPZ3"/>
<dbReference type="Ensembl" id="ENSMUST00000249896.1">
    <molecule id="Q6ZPZ3-1"/>
    <property type="protein sequence ID" value="ENSMUSP00000159993.1"/>
    <property type="gene ID" value="ENSMUSG00000059273.11"/>
</dbReference>
<dbReference type="GeneID" id="330474"/>
<dbReference type="KEGG" id="mmu:330474"/>
<dbReference type="UCSC" id="uc009fht.1">
    <molecule id="Q6ZPZ3-2"/>
    <property type="organism name" value="mouse"/>
</dbReference>
<dbReference type="AGR" id="MGI:2682314"/>
<dbReference type="CTD" id="23211"/>
<dbReference type="MGI" id="MGI:2682314">
    <property type="gene designation" value="Zc3h4"/>
</dbReference>
<dbReference type="eggNOG" id="KOG1040">
    <property type="taxonomic scope" value="Eukaryota"/>
</dbReference>
<dbReference type="GeneTree" id="ENSGT00940000160011"/>
<dbReference type="InParanoid" id="Q6ZPZ3"/>
<dbReference type="OrthoDB" id="411372at2759"/>
<dbReference type="PhylomeDB" id="Q6ZPZ3"/>
<dbReference type="BioGRID-ORCS" id="330474">
    <property type="hits" value="15 hits in 78 CRISPR screens"/>
</dbReference>
<dbReference type="ChiTaRS" id="Zc3h4">
    <property type="organism name" value="mouse"/>
</dbReference>
<dbReference type="PRO" id="PR:Q6ZPZ3"/>
<dbReference type="Proteomes" id="UP000000589">
    <property type="component" value="Chromosome 7"/>
</dbReference>
<dbReference type="RNAct" id="Q6ZPZ3">
    <property type="molecule type" value="protein"/>
</dbReference>
<dbReference type="GO" id="GO:0005694">
    <property type="term" value="C:chromosome"/>
    <property type="evidence" value="ECO:0007669"/>
    <property type="project" value="UniProtKB-SubCell"/>
</dbReference>
<dbReference type="GO" id="GO:0005829">
    <property type="term" value="C:cytosol"/>
    <property type="evidence" value="ECO:0007669"/>
    <property type="project" value="Ensembl"/>
</dbReference>
<dbReference type="GO" id="GO:0005654">
    <property type="term" value="C:nucleoplasm"/>
    <property type="evidence" value="ECO:0007669"/>
    <property type="project" value="Ensembl"/>
</dbReference>
<dbReference type="GO" id="GO:0003682">
    <property type="term" value="F:chromatin binding"/>
    <property type="evidence" value="ECO:0000314"/>
    <property type="project" value="UniProtKB"/>
</dbReference>
<dbReference type="GO" id="GO:1990841">
    <property type="term" value="F:promoter-specific chromatin binding"/>
    <property type="evidence" value="ECO:0007669"/>
    <property type="project" value="Ensembl"/>
</dbReference>
<dbReference type="GO" id="GO:0003723">
    <property type="term" value="F:RNA binding"/>
    <property type="evidence" value="ECO:0007669"/>
    <property type="project" value="UniProtKB-KW"/>
</dbReference>
<dbReference type="GO" id="GO:0008270">
    <property type="term" value="F:zinc ion binding"/>
    <property type="evidence" value="ECO:0007669"/>
    <property type="project" value="UniProtKB-KW"/>
</dbReference>
<dbReference type="GO" id="GO:0006353">
    <property type="term" value="P:DNA-templated transcription termination"/>
    <property type="evidence" value="ECO:0007669"/>
    <property type="project" value="UniProtKB-KW"/>
</dbReference>
<dbReference type="GO" id="GO:0110064">
    <property type="term" value="P:lncRNA catabolic process"/>
    <property type="evidence" value="ECO:0000314"/>
    <property type="project" value="UniProtKB"/>
</dbReference>
<dbReference type="GO" id="GO:0032785">
    <property type="term" value="P:negative regulation of DNA-templated transcription, elongation"/>
    <property type="evidence" value="ECO:0000314"/>
    <property type="project" value="UniProtKB"/>
</dbReference>
<dbReference type="GO" id="GO:0140744">
    <property type="term" value="P:negative regulation of lncRNA transcription"/>
    <property type="evidence" value="ECO:0000314"/>
    <property type="project" value="UniProtKB"/>
</dbReference>
<dbReference type="GO" id="GO:0071027">
    <property type="term" value="P:nuclear RNA surveillance"/>
    <property type="evidence" value="ECO:0000314"/>
    <property type="project" value="UniProtKB"/>
</dbReference>
<dbReference type="FunFam" id="4.10.1000.10:FF:000013">
    <property type="entry name" value="zinc finger CCCH domain-containing protein 4 isoform X1"/>
    <property type="match status" value="1"/>
</dbReference>
<dbReference type="Gene3D" id="4.10.1000.10">
    <property type="entry name" value="Zinc finger, CCCH-type"/>
    <property type="match status" value="1"/>
</dbReference>
<dbReference type="InterPro" id="IPR045124">
    <property type="entry name" value="Su(sable)-like"/>
</dbReference>
<dbReference type="InterPro" id="IPR041367">
    <property type="entry name" value="Znf-CCCH_4"/>
</dbReference>
<dbReference type="InterPro" id="IPR054361">
    <property type="entry name" value="Znf-CCCH_ZC3H4/6/8"/>
</dbReference>
<dbReference type="InterPro" id="IPR000571">
    <property type="entry name" value="Znf_CCCH"/>
</dbReference>
<dbReference type="InterPro" id="IPR036855">
    <property type="entry name" value="Znf_CCCH_sf"/>
</dbReference>
<dbReference type="PANTHER" id="PTHR13119">
    <property type="entry name" value="ZINC FINGER CCCH DOMAIN-CONTAINING PROTEI"/>
    <property type="match status" value="1"/>
</dbReference>
<dbReference type="PANTHER" id="PTHR13119:SF23">
    <property type="entry name" value="ZINC FINGER CCCH DOMAIN-CONTAINING PROTEIN 4"/>
    <property type="match status" value="1"/>
</dbReference>
<dbReference type="Pfam" id="PF00642">
    <property type="entry name" value="zf-CCCH"/>
    <property type="match status" value="1"/>
</dbReference>
<dbReference type="Pfam" id="PF18044">
    <property type="entry name" value="zf-CCCH_4"/>
    <property type="match status" value="1"/>
</dbReference>
<dbReference type="Pfam" id="PF22623">
    <property type="entry name" value="zf-CCCH_9"/>
    <property type="match status" value="1"/>
</dbReference>
<dbReference type="SMART" id="SM00356">
    <property type="entry name" value="ZnF_C3H1"/>
    <property type="match status" value="3"/>
</dbReference>
<dbReference type="SUPFAM" id="SSF90229">
    <property type="entry name" value="CCCH zinc finger"/>
    <property type="match status" value="3"/>
</dbReference>
<dbReference type="PROSITE" id="PS50103">
    <property type="entry name" value="ZF_C3H1"/>
    <property type="match status" value="3"/>
</dbReference>